<evidence type="ECO:0000255" key="1">
    <source>
        <dbReference type="HAMAP-Rule" id="MF_00378"/>
    </source>
</evidence>
<protein>
    <recommendedName>
        <fullName evidence="1">Exodeoxyribonuclease 7 large subunit</fullName>
        <ecNumber evidence="1">3.1.11.6</ecNumber>
    </recommendedName>
    <alternativeName>
        <fullName evidence="1">Exodeoxyribonuclease VII large subunit</fullName>
        <shortName evidence="1">Exonuclease VII large subunit</shortName>
    </alternativeName>
</protein>
<organism>
    <name type="scientific">Shewanella baltica (strain OS155 / ATCC BAA-1091)</name>
    <dbReference type="NCBI Taxonomy" id="325240"/>
    <lineage>
        <taxon>Bacteria</taxon>
        <taxon>Pseudomonadati</taxon>
        <taxon>Pseudomonadota</taxon>
        <taxon>Gammaproteobacteria</taxon>
        <taxon>Alteromonadales</taxon>
        <taxon>Shewanellaceae</taxon>
        <taxon>Shewanella</taxon>
    </lineage>
</organism>
<reference key="1">
    <citation type="submission" date="2007-02" db="EMBL/GenBank/DDBJ databases">
        <title>Complete sequence of chromosome of Shewanella baltica OS155.</title>
        <authorList>
            <consortium name="US DOE Joint Genome Institute"/>
            <person name="Copeland A."/>
            <person name="Lucas S."/>
            <person name="Lapidus A."/>
            <person name="Barry K."/>
            <person name="Detter J.C."/>
            <person name="Glavina del Rio T."/>
            <person name="Hammon N."/>
            <person name="Israni S."/>
            <person name="Dalin E."/>
            <person name="Tice H."/>
            <person name="Pitluck S."/>
            <person name="Sims D.R."/>
            <person name="Brettin T."/>
            <person name="Bruce D."/>
            <person name="Han C."/>
            <person name="Tapia R."/>
            <person name="Brainard J."/>
            <person name="Schmutz J."/>
            <person name="Larimer F."/>
            <person name="Land M."/>
            <person name="Hauser L."/>
            <person name="Kyrpides N."/>
            <person name="Mikhailova N."/>
            <person name="Brettar I."/>
            <person name="Klappenbach J."/>
            <person name="Konstantinidis K."/>
            <person name="Rodrigues J."/>
            <person name="Tiedje J."/>
            <person name="Richardson P."/>
        </authorList>
    </citation>
    <scope>NUCLEOTIDE SEQUENCE [LARGE SCALE GENOMIC DNA]</scope>
    <source>
        <strain>OS155 / ATCC BAA-1091</strain>
    </source>
</reference>
<name>EX7L_SHEB5</name>
<comment type="function">
    <text evidence="1">Bidirectionally degrades single-stranded DNA into large acid-insoluble oligonucleotides, which are then degraded further into small acid-soluble oligonucleotides.</text>
</comment>
<comment type="catalytic activity">
    <reaction evidence="1">
        <text>Exonucleolytic cleavage in either 5'- to 3'- or 3'- to 5'-direction to yield nucleoside 5'-phosphates.</text>
        <dbReference type="EC" id="3.1.11.6"/>
    </reaction>
</comment>
<comment type="subunit">
    <text evidence="1">Heterooligomer composed of large and small subunits.</text>
</comment>
<comment type="subcellular location">
    <subcellularLocation>
        <location evidence="1">Cytoplasm</location>
    </subcellularLocation>
</comment>
<comment type="similarity">
    <text evidence="1">Belongs to the XseA family.</text>
</comment>
<gene>
    <name evidence="1" type="primary">xseA</name>
    <name type="ordered locus">Sbal_2985</name>
</gene>
<accession>A3D6V4</accession>
<proteinExistence type="inferred from homology"/>
<keyword id="KW-0963">Cytoplasm</keyword>
<keyword id="KW-0269">Exonuclease</keyword>
<keyword id="KW-0378">Hydrolase</keyword>
<keyword id="KW-0540">Nuclease</keyword>
<keyword id="KW-1185">Reference proteome</keyword>
<dbReference type="EC" id="3.1.11.6" evidence="1"/>
<dbReference type="EMBL" id="CP000563">
    <property type="protein sequence ID" value="ABN62467.1"/>
    <property type="molecule type" value="Genomic_DNA"/>
</dbReference>
<dbReference type="RefSeq" id="WP_011847340.1">
    <property type="nucleotide sequence ID" value="NC_009052.1"/>
</dbReference>
<dbReference type="SMR" id="A3D6V4"/>
<dbReference type="STRING" id="325240.Sbal_2985"/>
<dbReference type="KEGG" id="sbl:Sbal_2985"/>
<dbReference type="HOGENOM" id="CLU_023625_3_1_6"/>
<dbReference type="OrthoDB" id="9802795at2"/>
<dbReference type="Proteomes" id="UP000001557">
    <property type="component" value="Chromosome"/>
</dbReference>
<dbReference type="GO" id="GO:0005737">
    <property type="term" value="C:cytoplasm"/>
    <property type="evidence" value="ECO:0007669"/>
    <property type="project" value="UniProtKB-SubCell"/>
</dbReference>
<dbReference type="GO" id="GO:0009318">
    <property type="term" value="C:exodeoxyribonuclease VII complex"/>
    <property type="evidence" value="ECO:0007669"/>
    <property type="project" value="InterPro"/>
</dbReference>
<dbReference type="GO" id="GO:0008855">
    <property type="term" value="F:exodeoxyribonuclease VII activity"/>
    <property type="evidence" value="ECO:0007669"/>
    <property type="project" value="UniProtKB-UniRule"/>
</dbReference>
<dbReference type="GO" id="GO:0003676">
    <property type="term" value="F:nucleic acid binding"/>
    <property type="evidence" value="ECO:0007669"/>
    <property type="project" value="InterPro"/>
</dbReference>
<dbReference type="GO" id="GO:0006308">
    <property type="term" value="P:DNA catabolic process"/>
    <property type="evidence" value="ECO:0007669"/>
    <property type="project" value="UniProtKB-UniRule"/>
</dbReference>
<dbReference type="CDD" id="cd04489">
    <property type="entry name" value="ExoVII_LU_OBF"/>
    <property type="match status" value="1"/>
</dbReference>
<dbReference type="HAMAP" id="MF_00378">
    <property type="entry name" value="Exonuc_7_L"/>
    <property type="match status" value="1"/>
</dbReference>
<dbReference type="InterPro" id="IPR003753">
    <property type="entry name" value="Exonuc_VII_L"/>
</dbReference>
<dbReference type="InterPro" id="IPR020579">
    <property type="entry name" value="Exonuc_VII_lsu_C"/>
</dbReference>
<dbReference type="InterPro" id="IPR025824">
    <property type="entry name" value="OB-fold_nuc-bd_dom"/>
</dbReference>
<dbReference type="NCBIfam" id="TIGR00237">
    <property type="entry name" value="xseA"/>
    <property type="match status" value="1"/>
</dbReference>
<dbReference type="PANTHER" id="PTHR30008">
    <property type="entry name" value="EXODEOXYRIBONUCLEASE 7 LARGE SUBUNIT"/>
    <property type="match status" value="1"/>
</dbReference>
<dbReference type="PANTHER" id="PTHR30008:SF0">
    <property type="entry name" value="EXODEOXYRIBONUCLEASE 7 LARGE SUBUNIT"/>
    <property type="match status" value="1"/>
</dbReference>
<dbReference type="Pfam" id="PF02601">
    <property type="entry name" value="Exonuc_VII_L"/>
    <property type="match status" value="1"/>
</dbReference>
<dbReference type="Pfam" id="PF13742">
    <property type="entry name" value="tRNA_anti_2"/>
    <property type="match status" value="1"/>
</dbReference>
<feature type="chain" id="PRO_1000048784" description="Exodeoxyribonuclease 7 large subunit">
    <location>
        <begin position="1"/>
        <end position="448"/>
    </location>
</feature>
<sequence length="448" mass="49975">MQGTKNNIYTVSRLNGEVRQILEGQLGKIWLNGEISNFSSPSSGHWYLTLKDHSSQIRCAMFKGRNQTVSFKPINGQQVLVKGAISVYEPRGDYQLLIESMLPAGDGLLAQQFDALKMKLAAEGLFAADTKRPLPKNIQRIGVITSPTGAAIRDVLHVLARRDPSIEVIIYPTQVQGETAAQSICQAINIANQRLEVDVLLLTRGGGSLEDLWCFNSEALAHTIYNSALPVVSAVGHEVDTTISDYVADIRAPTPSAGAELLSQDSDNKAQKLATALSRLQQSAKHYQLKQERRLSLLEHRLQRQDPKRTLQQFEQRFDEMQLRLESALLNRLHILSRRQQLLASRLEQQSPKHKLTIEGNRLSYLASRLQDALQDKLSQSEQRIKYAAHQLETVSPLATLSRGYSITTDIHNQVVDSADKLTIGDSLQTRLRHGQVISTVTQIKPLE</sequence>